<keyword id="KW-0002">3D-structure</keyword>
<keyword id="KW-0965">Cell junction</keyword>
<keyword id="KW-1003">Cell membrane</keyword>
<keyword id="KW-0903">Direct protein sequencing</keyword>
<keyword id="KW-0225">Disease variant</keyword>
<keyword id="KW-1015">Disulfide bond</keyword>
<keyword id="KW-0325">Glycoprotein</keyword>
<keyword id="KW-0362">Hereditary nonpolyposis colorectal cancer</keyword>
<keyword id="KW-0472">Membrane</keyword>
<keyword id="KW-1267">Proteomics identification</keyword>
<keyword id="KW-1185">Reference proteome</keyword>
<keyword id="KW-0677">Repeat</keyword>
<keyword id="KW-0732">Signal</keyword>
<keyword id="KW-0796">Tight junction</keyword>
<keyword id="KW-0812">Transmembrane</keyword>
<keyword id="KW-1133">Transmembrane helix</keyword>
<keyword id="KW-0825">Tumor antigen</keyword>
<feature type="signal peptide" evidence="1">
    <location>
        <begin position="1"/>
        <end position="23"/>
    </location>
</feature>
<feature type="chain" id="PRO_0000022467" description="Epithelial cell adhesion molecule">
    <location>
        <begin position="24"/>
        <end position="314"/>
    </location>
</feature>
<feature type="topological domain" description="Extracellular" evidence="1">
    <location>
        <begin position="24"/>
        <end position="265"/>
    </location>
</feature>
<feature type="transmembrane region" description="Helical" evidence="1">
    <location>
        <begin position="266"/>
        <end position="288"/>
    </location>
</feature>
<feature type="topological domain" description="Cytoplasmic" evidence="1">
    <location>
        <begin position="289"/>
        <end position="314"/>
    </location>
</feature>
<feature type="domain" description="Thyroglobulin type-1" evidence="2">
    <location>
        <begin position="63"/>
        <end position="135"/>
    </location>
</feature>
<feature type="glycosylation site" description="N-linked (GlcNAc...) asparagine; partial" evidence="3 8">
    <location>
        <position position="74"/>
    </location>
</feature>
<feature type="glycosylation site" description="N-linked (GlcNAc...) asparagine" evidence="3 8">
    <location>
        <position position="111"/>
    </location>
</feature>
<feature type="glycosylation site" description="N-linked (GlcNAc...) asparagine" evidence="8 11">
    <location>
        <position position="198"/>
    </location>
</feature>
<feature type="disulfide bond" evidence="2 3">
    <location>
        <begin position="27"/>
        <end position="46"/>
    </location>
</feature>
<feature type="disulfide bond" evidence="2 3">
    <location>
        <begin position="29"/>
        <end position="59"/>
    </location>
</feature>
<feature type="disulfide bond" evidence="2 3">
    <location>
        <begin position="38"/>
        <end position="48"/>
    </location>
</feature>
<feature type="disulfide bond" evidence="2 3">
    <location>
        <begin position="66"/>
        <end position="99"/>
    </location>
</feature>
<feature type="disulfide bond" evidence="2 3">
    <location>
        <begin position="110"/>
        <end position="116"/>
    </location>
</feature>
<feature type="disulfide bond" evidence="2 3">
    <location>
        <begin position="118"/>
        <end position="135"/>
    </location>
</feature>
<feature type="sequence variant" id="VAR_063829" description="In DIAR5; dbSNP:rs267606785." evidence="9">
    <original>C</original>
    <variation>Y</variation>
    <location>
        <position position="66"/>
    </location>
</feature>
<feature type="sequence variant" id="VAR_089317" description="In DIAR5; likely pathogenic." evidence="15">
    <location>
        <begin position="76"/>
        <end position="314"/>
    </location>
</feature>
<feature type="sequence variant" id="VAR_089318" description="In DIAR5; uncertain significance; dbSNP:rs1346393896." evidence="15">
    <original>G</original>
    <variation>R</variation>
    <location>
        <position position="103"/>
    </location>
</feature>
<feature type="sequence variant" id="VAR_089319" description="In DIAR5; uncertain significance." evidence="15">
    <original>F</original>
    <variation>C</variation>
    <location>
        <position position="105"/>
    </location>
</feature>
<feature type="sequence variant" id="VAR_018329" description="In dbSNP:rs1126497." evidence="5 14 16 17">
    <original>M</original>
    <variation>T</variation>
    <location>
        <position position="115"/>
    </location>
</feature>
<feature type="sequence variant" id="VAR_089320" description="In DIAR5; uncertain significance; dbSNP:rs2103747763." evidence="15">
    <original>N</original>
    <variation>I</variation>
    <location>
        <position position="120"/>
    </location>
</feature>
<feature type="sequence variant" id="VAR_089321" description="In DIAR5; likely pathogenic." evidence="15">
    <location>
        <begin position="132"/>
        <end position="314"/>
    </location>
</feature>
<feature type="mutagenesis site" description="Changed glycosylation pattern. Complete loss of glycosylation and substantial decrease in protein expression; when associated with A-111 and A-198." evidence="8">
    <original>N</original>
    <variation>A</variation>
    <location>
        <position position="74"/>
    </location>
</feature>
<feature type="mutagenesis site" description="Changed glycosylation pattern. Complete loss of glycosylation and substantial decrease in protein expression; when associated with A-74 and A-198." evidence="8">
    <original>N</original>
    <variation>A</variation>
    <location>
        <position position="111"/>
    </location>
</feature>
<feature type="mutagenesis site" description="Decreased glycosylation, reduced protein stability and significant decrease in protein expression. Complete loss of glycosylation and substantial decrease in protein expression; when associated with A-74 and A-111." evidence="8">
    <original>N</original>
    <variation>A</variation>
    <location>
        <position position="198"/>
    </location>
</feature>
<feature type="sequence conflict" description="In Ref. 1; AAA36151/CAA32870 and 2; AAA59543." evidence="19" ref="1 2">
    <original>I</original>
    <variation>M</variation>
    <location>
        <position position="277"/>
    </location>
</feature>
<feature type="sequence conflict" description="In Ref. 6; CAG47055." evidence="19" ref="6">
    <original>K</original>
    <variation>R</variation>
    <location>
        <position position="303"/>
    </location>
</feature>
<feature type="strand" evidence="20">
    <location>
        <begin position="35"/>
        <end position="40"/>
    </location>
</feature>
<feature type="strand" evidence="20">
    <location>
        <begin position="46"/>
        <end position="50"/>
    </location>
</feature>
<feature type="strand" evidence="20">
    <location>
        <begin position="56"/>
        <end position="58"/>
    </location>
</feature>
<feature type="helix" evidence="20">
    <location>
        <begin position="65"/>
        <end position="72"/>
    </location>
</feature>
<feature type="turn" evidence="20">
    <location>
        <begin position="73"/>
        <end position="75"/>
    </location>
</feature>
<feature type="strand" evidence="20">
    <location>
        <begin position="107"/>
        <end position="111"/>
    </location>
</feature>
<feature type="turn" evidence="20">
    <location>
        <begin position="112"/>
        <end position="114"/>
    </location>
</feature>
<feature type="strand" evidence="20">
    <location>
        <begin position="115"/>
        <end position="120"/>
    </location>
</feature>
<feature type="strand" evidence="20">
    <location>
        <begin position="130"/>
        <end position="132"/>
    </location>
</feature>
<feature type="strand" evidence="20">
    <location>
        <begin position="141"/>
        <end position="150"/>
    </location>
</feature>
<feature type="helix" evidence="20">
    <location>
        <begin position="159"/>
        <end position="173"/>
    </location>
</feature>
<feature type="helix" evidence="20">
    <location>
        <begin position="178"/>
        <end position="180"/>
    </location>
</feature>
<feature type="strand" evidence="20">
    <location>
        <begin position="181"/>
        <end position="187"/>
    </location>
</feature>
<feature type="strand" evidence="20">
    <location>
        <begin position="190"/>
        <end position="196"/>
    </location>
</feature>
<feature type="turn" evidence="20">
    <location>
        <begin position="199"/>
        <end position="201"/>
    </location>
</feature>
<feature type="helix" evidence="20">
    <location>
        <begin position="209"/>
        <end position="220"/>
    </location>
</feature>
<feature type="strand" evidence="20">
    <location>
        <begin position="226"/>
        <end position="228"/>
    </location>
</feature>
<feature type="strand" evidence="21">
    <location>
        <begin position="234"/>
        <end position="237"/>
    </location>
</feature>
<feature type="helix" evidence="20">
    <location>
        <begin position="244"/>
        <end position="246"/>
    </location>
</feature>
<feature type="strand" evidence="20">
    <location>
        <begin position="248"/>
        <end position="255"/>
    </location>
</feature>
<evidence type="ECO:0000255" key="1"/>
<evidence type="ECO:0000255" key="2">
    <source>
        <dbReference type="PROSITE-ProRule" id="PRU00500"/>
    </source>
</evidence>
<evidence type="ECO:0000269" key="3">
    <source>
    </source>
</evidence>
<evidence type="ECO:0000269" key="4">
    <source>
    </source>
</evidence>
<evidence type="ECO:0000269" key="5">
    <source>
    </source>
</evidence>
<evidence type="ECO:0000269" key="6">
    <source>
    </source>
</evidence>
<evidence type="ECO:0000269" key="7">
    <source>
    </source>
</evidence>
<evidence type="ECO:0000269" key="8">
    <source>
    </source>
</evidence>
<evidence type="ECO:0000269" key="9">
    <source>
    </source>
</evidence>
<evidence type="ECO:0000269" key="10">
    <source>
    </source>
</evidence>
<evidence type="ECO:0000269" key="11">
    <source>
    </source>
</evidence>
<evidence type="ECO:0000269" key="12">
    <source>
    </source>
</evidence>
<evidence type="ECO:0000269" key="13">
    <source>
    </source>
</evidence>
<evidence type="ECO:0000269" key="14">
    <source>
    </source>
</evidence>
<evidence type="ECO:0000269" key="15">
    <source>
    </source>
</evidence>
<evidence type="ECO:0000269" key="16">
    <source>
    </source>
</evidence>
<evidence type="ECO:0000269" key="17">
    <source>
    </source>
</evidence>
<evidence type="ECO:0000269" key="18">
    <source>
    </source>
</evidence>
<evidence type="ECO:0000305" key="19"/>
<evidence type="ECO:0007829" key="20">
    <source>
        <dbReference type="PDB" id="4MZV"/>
    </source>
</evidence>
<evidence type="ECO:0007829" key="21">
    <source>
        <dbReference type="PDB" id="6I07"/>
    </source>
</evidence>
<proteinExistence type="evidence at protein level"/>
<dbReference type="EMBL" id="M32325">
    <property type="protein sequence ID" value="AAA36151.1"/>
    <property type="molecule type" value="mRNA"/>
</dbReference>
<dbReference type="EMBL" id="X14758">
    <property type="protein sequence ID" value="CAA32870.1"/>
    <property type="molecule type" value="mRNA"/>
</dbReference>
<dbReference type="EMBL" id="M26481">
    <property type="protein sequence ID" value="AAA59543.1"/>
    <property type="molecule type" value="mRNA"/>
</dbReference>
<dbReference type="EMBL" id="M32306">
    <property type="protein sequence ID" value="AAA35723.1"/>
    <property type="molecule type" value="mRNA"/>
</dbReference>
<dbReference type="EMBL" id="M33011">
    <property type="protein sequence ID" value="AAA35861.1"/>
    <property type="molecule type" value="mRNA"/>
</dbReference>
<dbReference type="EMBL" id="M93036">
    <property type="protein sequence ID" value="AAB00775.1"/>
    <property type="molecule type" value="Genomic_DNA"/>
</dbReference>
<dbReference type="EMBL" id="M93029">
    <property type="protein sequence ID" value="AAB00775.1"/>
    <property type="status" value="JOINED"/>
    <property type="molecule type" value="Genomic_DNA"/>
</dbReference>
<dbReference type="EMBL" id="M93030">
    <property type="protein sequence ID" value="AAB00775.1"/>
    <property type="status" value="JOINED"/>
    <property type="molecule type" value="Genomic_DNA"/>
</dbReference>
<dbReference type="EMBL" id="M93031">
    <property type="protein sequence ID" value="AAB00775.1"/>
    <property type="status" value="JOINED"/>
    <property type="molecule type" value="Genomic_DNA"/>
</dbReference>
<dbReference type="EMBL" id="M93032">
    <property type="protein sequence ID" value="AAB00775.1"/>
    <property type="status" value="JOINED"/>
    <property type="molecule type" value="Genomic_DNA"/>
</dbReference>
<dbReference type="EMBL" id="M93033">
    <property type="protein sequence ID" value="AAB00775.1"/>
    <property type="status" value="JOINED"/>
    <property type="molecule type" value="Genomic_DNA"/>
</dbReference>
<dbReference type="EMBL" id="M93034">
    <property type="protein sequence ID" value="AAB00775.1"/>
    <property type="status" value="JOINED"/>
    <property type="molecule type" value="Genomic_DNA"/>
</dbReference>
<dbReference type="EMBL" id="M93035">
    <property type="protein sequence ID" value="AAB00775.1"/>
    <property type="status" value="JOINED"/>
    <property type="molecule type" value="Genomic_DNA"/>
</dbReference>
<dbReference type="EMBL" id="CR542259">
    <property type="protein sequence ID" value="CAG47055.1"/>
    <property type="molecule type" value="mRNA"/>
</dbReference>
<dbReference type="EMBL" id="CR542283">
    <property type="protein sequence ID" value="CAG47078.1"/>
    <property type="molecule type" value="mRNA"/>
</dbReference>
<dbReference type="EMBL" id="AC079775">
    <property type="protein sequence ID" value="AAY15095.1"/>
    <property type="molecule type" value="Genomic_DNA"/>
</dbReference>
<dbReference type="EMBL" id="CH471053">
    <property type="protein sequence ID" value="EAX00218.1"/>
    <property type="molecule type" value="Genomic_DNA"/>
</dbReference>
<dbReference type="EMBL" id="BC014785">
    <property type="protein sequence ID" value="AAH14785.1"/>
    <property type="molecule type" value="mRNA"/>
</dbReference>
<dbReference type="CCDS" id="CCDS1833.1"/>
<dbReference type="PIR" id="B48149">
    <property type="entry name" value="B48149"/>
</dbReference>
<dbReference type="RefSeq" id="NP_002345.2">
    <property type="nucleotide sequence ID" value="NM_002354.3"/>
</dbReference>
<dbReference type="PDB" id="4MZV">
    <property type="method" value="X-ray"/>
    <property type="resolution" value="1.86 A"/>
    <property type="chains" value="A=24-265"/>
</dbReference>
<dbReference type="PDB" id="6I07">
    <property type="method" value="X-ray"/>
    <property type="resolution" value="2.35 A"/>
    <property type="chains" value="C/D=24-265"/>
</dbReference>
<dbReference type="PDBsum" id="4MZV"/>
<dbReference type="PDBsum" id="6I07"/>
<dbReference type="SMR" id="P16422"/>
<dbReference type="BioGRID" id="110250">
    <property type="interactions" value="31"/>
</dbReference>
<dbReference type="CORUM" id="P16422"/>
<dbReference type="FunCoup" id="P16422">
    <property type="interactions" value="328"/>
</dbReference>
<dbReference type="IntAct" id="P16422">
    <property type="interactions" value="17"/>
</dbReference>
<dbReference type="MINT" id="P16422"/>
<dbReference type="STRING" id="9606.ENSP00000263735"/>
<dbReference type="ChEMBL" id="CHEMBL3580493"/>
<dbReference type="DrugBank" id="DB06607">
    <property type="generic name" value="Catumaxomab"/>
</dbReference>
<dbReference type="DrugBank" id="DB06072">
    <property type="generic name" value="Citatuzumab Bogatox"/>
</dbReference>
<dbReference type="DrugBank" id="DB11075">
    <property type="generic name" value="Hypromellose"/>
</dbReference>
<dbReference type="DrugBank" id="DB05831">
    <property type="generic name" value="ING-1"/>
</dbReference>
<dbReference type="DrugBank" id="DB05319">
    <property type="generic name" value="Oportuzumab monatox"/>
</dbReference>
<dbReference type="DrugBank" id="DB09336">
    <property type="generic name" value="Technetium Tc-99m nofetumomab merpentan"/>
</dbReference>
<dbReference type="GlyConnect" id="1217">
    <property type="glycosylation" value="34 N-Linked glycans (3 sites)"/>
</dbReference>
<dbReference type="GlyCosmos" id="P16422">
    <property type="glycosylation" value="3 sites, 34 glycans"/>
</dbReference>
<dbReference type="GlyGen" id="P16422">
    <property type="glycosylation" value="6 sites, 63 N-linked glycans (3 sites), 2 O-linked glycans (3 sites)"/>
</dbReference>
<dbReference type="iPTMnet" id="P16422"/>
<dbReference type="MetOSite" id="P16422"/>
<dbReference type="PhosphoSitePlus" id="P16422"/>
<dbReference type="SwissPalm" id="P16422"/>
<dbReference type="BioMuta" id="EPCAM"/>
<dbReference type="DMDM" id="160266056"/>
<dbReference type="CPTAC" id="CPTAC-502"/>
<dbReference type="CPTAC" id="CPTAC-503"/>
<dbReference type="jPOST" id="P16422"/>
<dbReference type="MassIVE" id="P16422"/>
<dbReference type="PaxDb" id="9606-ENSP00000263735"/>
<dbReference type="PeptideAtlas" id="P16422"/>
<dbReference type="ProteomicsDB" id="53359"/>
<dbReference type="Pumba" id="P16422"/>
<dbReference type="ABCD" id="P16422">
    <property type="antibodies" value="30 sequenced antibodies"/>
</dbReference>
<dbReference type="Antibodypedia" id="3539">
    <property type="antibodies" value="4977 antibodies from 63 providers"/>
</dbReference>
<dbReference type="DNASU" id="4072"/>
<dbReference type="Ensembl" id="ENST00000263735.9">
    <property type="protein sequence ID" value="ENSP00000263735.4"/>
    <property type="gene ID" value="ENSG00000119888.11"/>
</dbReference>
<dbReference type="GeneID" id="4072"/>
<dbReference type="KEGG" id="hsa:4072"/>
<dbReference type="MANE-Select" id="ENST00000263735.9">
    <property type="protein sequence ID" value="ENSP00000263735.4"/>
    <property type="RefSeq nucleotide sequence ID" value="NM_002354.3"/>
    <property type="RefSeq protein sequence ID" value="NP_002345.2"/>
</dbReference>
<dbReference type="UCSC" id="uc002rvx.4">
    <property type="organism name" value="human"/>
</dbReference>
<dbReference type="AGR" id="HGNC:11529"/>
<dbReference type="CTD" id="4072"/>
<dbReference type="DisGeNET" id="4072"/>
<dbReference type="GeneCards" id="EPCAM"/>
<dbReference type="GeneReviews" id="EPCAM"/>
<dbReference type="HGNC" id="HGNC:11529">
    <property type="gene designation" value="EPCAM"/>
</dbReference>
<dbReference type="HPA" id="ENSG00000119888">
    <property type="expression patterns" value="Tissue enhanced (intestine)"/>
</dbReference>
<dbReference type="MalaCards" id="EPCAM"/>
<dbReference type="MIM" id="185535">
    <property type="type" value="gene"/>
</dbReference>
<dbReference type="MIM" id="613217">
    <property type="type" value="phenotype"/>
</dbReference>
<dbReference type="MIM" id="613244">
    <property type="type" value="phenotype"/>
</dbReference>
<dbReference type="neXtProt" id="NX_P16422"/>
<dbReference type="OpenTargets" id="ENSG00000119888"/>
<dbReference type="Orphanet" id="92050">
    <property type="disease" value="Congenital tufting enteropathy"/>
</dbReference>
<dbReference type="Orphanet" id="144">
    <property type="disease" value="Lynch syndrome"/>
</dbReference>
<dbReference type="PharmGKB" id="PA35493"/>
<dbReference type="VEuPathDB" id="HostDB:ENSG00000119888"/>
<dbReference type="eggNOG" id="ENOG502QVSU">
    <property type="taxonomic scope" value="Eukaryota"/>
</dbReference>
<dbReference type="GeneTree" id="ENSGT00390000018245"/>
<dbReference type="HOGENOM" id="CLU_075326_0_0_1"/>
<dbReference type="InParanoid" id="P16422"/>
<dbReference type="OMA" id="CQCKSIG"/>
<dbReference type="OrthoDB" id="8953056at2759"/>
<dbReference type="PAN-GO" id="P16422">
    <property type="GO annotations" value="2 GO annotations based on evolutionary models"/>
</dbReference>
<dbReference type="PhylomeDB" id="P16422"/>
<dbReference type="TreeFam" id="TF332767"/>
<dbReference type="BRENDA" id="2.4.1.37">
    <property type="organism ID" value="2681"/>
</dbReference>
<dbReference type="BRENDA" id="2.4.1.40">
    <property type="organism ID" value="2681"/>
</dbReference>
<dbReference type="PathwayCommons" id="P16422"/>
<dbReference type="Reactome" id="R-HSA-202733">
    <property type="pathway name" value="Cell surface interactions at the vascular wall"/>
</dbReference>
<dbReference type="SignaLink" id="P16422"/>
<dbReference type="SIGNOR" id="P16422"/>
<dbReference type="BioGRID-ORCS" id="4072">
    <property type="hits" value="34 hits in 1164 CRISPR screens"/>
</dbReference>
<dbReference type="ChiTaRS" id="EPCAM">
    <property type="organism name" value="human"/>
</dbReference>
<dbReference type="EvolutionaryTrace" id="P16422"/>
<dbReference type="GeneWiki" id="Epithelial_cell_adhesion_molecule"/>
<dbReference type="GenomeRNAi" id="4072"/>
<dbReference type="Pharos" id="P16422">
    <property type="development level" value="Tbio"/>
</dbReference>
<dbReference type="PRO" id="PR:P16422"/>
<dbReference type="Proteomes" id="UP000005640">
    <property type="component" value="Chromosome 2"/>
</dbReference>
<dbReference type="RNAct" id="P16422">
    <property type="molecule type" value="protein"/>
</dbReference>
<dbReference type="Bgee" id="ENSG00000119888">
    <property type="expression patterns" value="Expressed in jejunal mucosa and 176 other cell types or tissues"/>
</dbReference>
<dbReference type="ExpressionAtlas" id="P16422">
    <property type="expression patterns" value="baseline and differential"/>
</dbReference>
<dbReference type="GO" id="GO:0016324">
    <property type="term" value="C:apical plasma membrane"/>
    <property type="evidence" value="ECO:0000314"/>
    <property type="project" value="MGI"/>
</dbReference>
<dbReference type="GO" id="GO:0016323">
    <property type="term" value="C:basolateral plasma membrane"/>
    <property type="evidence" value="ECO:0000314"/>
    <property type="project" value="MGI"/>
</dbReference>
<dbReference type="GO" id="GO:0005923">
    <property type="term" value="C:bicellular tight junction"/>
    <property type="evidence" value="ECO:0000314"/>
    <property type="project" value="UniProtKB"/>
</dbReference>
<dbReference type="GO" id="GO:0009986">
    <property type="term" value="C:cell surface"/>
    <property type="evidence" value="ECO:0007669"/>
    <property type="project" value="Ensembl"/>
</dbReference>
<dbReference type="GO" id="GO:0070062">
    <property type="term" value="C:extracellular exosome"/>
    <property type="evidence" value="ECO:0007005"/>
    <property type="project" value="UniProtKB"/>
</dbReference>
<dbReference type="GO" id="GO:0016328">
    <property type="term" value="C:lateral plasma membrane"/>
    <property type="evidence" value="ECO:0000314"/>
    <property type="project" value="UniProtKB"/>
</dbReference>
<dbReference type="GO" id="GO:0005886">
    <property type="term" value="C:plasma membrane"/>
    <property type="evidence" value="ECO:0000314"/>
    <property type="project" value="UniProtKB"/>
</dbReference>
<dbReference type="GO" id="GO:0098641">
    <property type="term" value="F:cadherin binding involved in cell-cell adhesion"/>
    <property type="evidence" value="ECO:0000318"/>
    <property type="project" value="GO_Central"/>
</dbReference>
<dbReference type="GO" id="GO:0044877">
    <property type="term" value="F:protein-containing complex binding"/>
    <property type="evidence" value="ECO:0000314"/>
    <property type="project" value="UniProtKB"/>
</dbReference>
<dbReference type="GO" id="GO:2000048">
    <property type="term" value="P:negative regulation of cell-cell adhesion mediated by cadherin"/>
    <property type="evidence" value="ECO:0000314"/>
    <property type="project" value="UniProtKB"/>
</dbReference>
<dbReference type="GO" id="GO:0008284">
    <property type="term" value="P:positive regulation of cell population proliferation"/>
    <property type="evidence" value="ECO:0000314"/>
    <property type="project" value="UniProtKB"/>
</dbReference>
<dbReference type="GO" id="GO:2000648">
    <property type="term" value="P:positive regulation of stem cell proliferation"/>
    <property type="evidence" value="ECO:0000315"/>
    <property type="project" value="UniProtKB"/>
</dbReference>
<dbReference type="GO" id="GO:0045944">
    <property type="term" value="P:positive regulation of transcription by RNA polymerase II"/>
    <property type="evidence" value="ECO:0000314"/>
    <property type="project" value="UniProtKB"/>
</dbReference>
<dbReference type="GO" id="GO:0023019">
    <property type="term" value="P:signal transduction involved in regulation of gene expression"/>
    <property type="evidence" value="ECO:0000315"/>
    <property type="project" value="UniProtKB"/>
</dbReference>
<dbReference type="GO" id="GO:0048863">
    <property type="term" value="P:stem cell differentiation"/>
    <property type="evidence" value="ECO:0000315"/>
    <property type="project" value="UniProtKB"/>
</dbReference>
<dbReference type="GO" id="GO:0001657">
    <property type="term" value="P:ureteric bud development"/>
    <property type="evidence" value="ECO:0007669"/>
    <property type="project" value="Ensembl"/>
</dbReference>
<dbReference type="CDD" id="cd00191">
    <property type="entry name" value="TY"/>
    <property type="match status" value="1"/>
</dbReference>
<dbReference type="FunFam" id="4.10.800.10:FF:000015">
    <property type="entry name" value="Epithelial cell adhesion molecule"/>
    <property type="match status" value="1"/>
</dbReference>
<dbReference type="Gene3D" id="4.10.800.10">
    <property type="entry name" value="Thyroglobulin type-1"/>
    <property type="match status" value="1"/>
</dbReference>
<dbReference type="InterPro" id="IPR049420">
    <property type="entry name" value="EPCAM-Trop-2_C"/>
</dbReference>
<dbReference type="InterPro" id="IPR043406">
    <property type="entry name" value="EPCAM/Trop-2"/>
</dbReference>
<dbReference type="InterPro" id="IPR041630">
    <property type="entry name" value="EpCAM_N"/>
</dbReference>
<dbReference type="InterPro" id="IPR000716">
    <property type="entry name" value="Thyroglobulin_1"/>
</dbReference>
<dbReference type="InterPro" id="IPR036857">
    <property type="entry name" value="Thyroglobulin_1_sf"/>
</dbReference>
<dbReference type="PANTHER" id="PTHR14168:SF2">
    <property type="entry name" value="EPITHELIAL CELL ADHESION MOLECULE"/>
    <property type="match status" value="1"/>
</dbReference>
<dbReference type="PANTHER" id="PTHR14168">
    <property type="entry name" value="TUMOR-ASSOCIATED CALCIUM SIGNAL TRANSDUCER"/>
    <property type="match status" value="1"/>
</dbReference>
<dbReference type="Pfam" id="PF21283">
    <property type="entry name" value="EPCAM-Trop-2_C"/>
    <property type="match status" value="1"/>
</dbReference>
<dbReference type="Pfam" id="PF18635">
    <property type="entry name" value="EpCAM_N"/>
    <property type="match status" value="1"/>
</dbReference>
<dbReference type="Pfam" id="PF00086">
    <property type="entry name" value="Thyroglobulin_1"/>
    <property type="match status" value="1"/>
</dbReference>
<dbReference type="SMART" id="SM00211">
    <property type="entry name" value="TY"/>
    <property type="match status" value="1"/>
</dbReference>
<dbReference type="SUPFAM" id="SSF57610">
    <property type="entry name" value="Thyroglobulin type-1 domain"/>
    <property type="match status" value="1"/>
</dbReference>
<dbReference type="PROSITE" id="PS00484">
    <property type="entry name" value="THYROGLOBULIN_1_1"/>
    <property type="match status" value="1"/>
</dbReference>
<dbReference type="PROSITE" id="PS51162">
    <property type="entry name" value="THYROGLOBULIN_1_2"/>
    <property type="match status" value="1"/>
</dbReference>
<reference key="1">
    <citation type="journal article" date="1989" name="Cancer Res.">
        <title>Molecular cloning and characterization of a human adenocarcinoma/epithelial cell surface antigen complementary DNA.</title>
        <authorList>
            <person name="Strnad J."/>
            <person name="Hamilton A.E."/>
            <person name="Beavers L.S."/>
            <person name="Gamboa G.C."/>
            <person name="Apelgren L.D."/>
            <person name="Taber L.D."/>
            <person name="Sportsman J.R."/>
            <person name="Bumol T.F."/>
            <person name="Sharp J.D."/>
            <person name="Gadski R.A."/>
        </authorList>
    </citation>
    <scope>NUCLEOTIDE SEQUENCE [MRNA]</scope>
    <scope>VARIANT THR-115</scope>
    <source>
        <tissue>Lung adenocarcinoma</tissue>
    </source>
</reference>
<reference key="2">
    <citation type="journal article" date="1989" name="J. Immunol.">
        <title>Isolation and characterization of a cDNA encoding the KS1/4 epithelial carcinoma marker.</title>
        <authorList>
            <person name="Perez M.S."/>
            <person name="Walker L.E."/>
        </authorList>
    </citation>
    <scope>NUCLEOTIDE SEQUENCE [MRNA]</scope>
    <scope>VARIANT THR-115</scope>
</reference>
<reference key="3">
    <citation type="journal article" date="1990" name="Proc. Natl. Acad. Sci. U.S.A.">
        <title>Epithelial glycoprotein is a member of a family of epithelial cell surface antigens homologous to nidogen, a matrix adhesion protein.</title>
        <authorList>
            <person name="Simon B."/>
            <person name="Podolsky D.K."/>
            <person name="Moldenhauer G."/>
            <person name="Isselbacher K.J."/>
            <person name="Gattoni-Celli S."/>
            <person name="Brand S.J."/>
        </authorList>
    </citation>
    <scope>NUCLEOTIDE SEQUENCE [MRNA]</scope>
    <scope>VARIANT THR-115</scope>
</reference>
<reference key="4">
    <citation type="journal article" date="1990" name="Proc. Natl. Acad. Sci. U.S.A.">
        <title>Molecular cloning of cDNA for the carcinoma-associated antigen GA733-2.</title>
        <authorList>
            <person name="Szala S."/>
            <person name="Froehlich M."/>
            <person name="Scollon M."/>
            <person name="Kasai Y."/>
            <person name="Steplewski Z."/>
            <person name="Koprowski H."/>
            <person name="Linnenbach A.J."/>
        </authorList>
    </citation>
    <scope>NUCLEOTIDE SEQUENCE [MRNA]</scope>
    <source>
        <tissue>Colon carcinoma</tissue>
    </source>
</reference>
<reference key="5">
    <citation type="journal article" date="1993" name="Mol. Cell. Biol.">
        <title>Retroposition in a family of carcinoma-associated antigen genes.</title>
        <authorList>
            <person name="Linnenbach A.J."/>
            <person name="Seng B.A."/>
            <person name="Wu S."/>
            <person name="Robbins S."/>
            <person name="Scollon M."/>
            <person name="Pyrc J.J."/>
            <person name="Druck T."/>
            <person name="Huebner K."/>
        </authorList>
    </citation>
    <scope>NUCLEOTIDE SEQUENCE [GENOMIC DNA]</scope>
    <source>
        <tissue>Lymphoma</tissue>
    </source>
</reference>
<reference key="6">
    <citation type="submission" date="2004-06" db="EMBL/GenBank/DDBJ databases">
        <title>Cloning of human full open reading frames in Gateway(TM) system entry vector (pDONR201).</title>
        <authorList>
            <person name="Halleck A."/>
            <person name="Ebert L."/>
            <person name="Mkoundinya M."/>
            <person name="Schick M."/>
            <person name="Eisenstein S."/>
            <person name="Neubert P."/>
            <person name="Kstrang K."/>
            <person name="Schatten R."/>
            <person name="Shen B."/>
            <person name="Henze S."/>
            <person name="Mar W."/>
            <person name="Korn B."/>
            <person name="Zuo D."/>
            <person name="Hu Y."/>
            <person name="LaBaer J."/>
        </authorList>
    </citation>
    <scope>NUCLEOTIDE SEQUENCE [LARGE SCALE MRNA]</scope>
</reference>
<reference key="7">
    <citation type="journal article" date="2005" name="Nature">
        <title>Generation and annotation of the DNA sequences of human chromosomes 2 and 4.</title>
        <authorList>
            <person name="Hillier L.W."/>
            <person name="Graves T.A."/>
            <person name="Fulton R.S."/>
            <person name="Fulton L.A."/>
            <person name="Pepin K.H."/>
            <person name="Minx P."/>
            <person name="Wagner-McPherson C."/>
            <person name="Layman D."/>
            <person name="Wylie K."/>
            <person name="Sekhon M."/>
            <person name="Becker M.C."/>
            <person name="Fewell G.A."/>
            <person name="Delehaunty K.D."/>
            <person name="Miner T.L."/>
            <person name="Nash W.E."/>
            <person name="Kremitzki C."/>
            <person name="Oddy L."/>
            <person name="Du H."/>
            <person name="Sun H."/>
            <person name="Bradshaw-Cordum H."/>
            <person name="Ali J."/>
            <person name="Carter J."/>
            <person name="Cordes M."/>
            <person name="Harris A."/>
            <person name="Isak A."/>
            <person name="van Brunt A."/>
            <person name="Nguyen C."/>
            <person name="Du F."/>
            <person name="Courtney L."/>
            <person name="Kalicki J."/>
            <person name="Ozersky P."/>
            <person name="Abbott S."/>
            <person name="Armstrong J."/>
            <person name="Belter E.A."/>
            <person name="Caruso L."/>
            <person name="Cedroni M."/>
            <person name="Cotton M."/>
            <person name="Davidson T."/>
            <person name="Desai A."/>
            <person name="Elliott G."/>
            <person name="Erb T."/>
            <person name="Fronick C."/>
            <person name="Gaige T."/>
            <person name="Haakenson W."/>
            <person name="Haglund K."/>
            <person name="Holmes A."/>
            <person name="Harkins R."/>
            <person name="Kim K."/>
            <person name="Kruchowski S.S."/>
            <person name="Strong C.M."/>
            <person name="Grewal N."/>
            <person name="Goyea E."/>
            <person name="Hou S."/>
            <person name="Levy A."/>
            <person name="Martinka S."/>
            <person name="Mead K."/>
            <person name="McLellan M.D."/>
            <person name="Meyer R."/>
            <person name="Randall-Maher J."/>
            <person name="Tomlinson C."/>
            <person name="Dauphin-Kohlberg S."/>
            <person name="Kozlowicz-Reilly A."/>
            <person name="Shah N."/>
            <person name="Swearengen-Shahid S."/>
            <person name="Snider J."/>
            <person name="Strong J.T."/>
            <person name="Thompson J."/>
            <person name="Yoakum M."/>
            <person name="Leonard S."/>
            <person name="Pearman C."/>
            <person name="Trani L."/>
            <person name="Radionenko M."/>
            <person name="Waligorski J.E."/>
            <person name="Wang C."/>
            <person name="Rock S.M."/>
            <person name="Tin-Wollam A.-M."/>
            <person name="Maupin R."/>
            <person name="Latreille P."/>
            <person name="Wendl M.C."/>
            <person name="Yang S.-P."/>
            <person name="Pohl C."/>
            <person name="Wallis J.W."/>
            <person name="Spieth J."/>
            <person name="Bieri T.A."/>
            <person name="Berkowicz N."/>
            <person name="Nelson J.O."/>
            <person name="Osborne J."/>
            <person name="Ding L."/>
            <person name="Meyer R."/>
            <person name="Sabo A."/>
            <person name="Shotland Y."/>
            <person name="Sinha P."/>
            <person name="Wohldmann P.E."/>
            <person name="Cook L.L."/>
            <person name="Hickenbotham M.T."/>
            <person name="Eldred J."/>
            <person name="Williams D."/>
            <person name="Jones T.A."/>
            <person name="She X."/>
            <person name="Ciccarelli F.D."/>
            <person name="Izaurralde E."/>
            <person name="Taylor J."/>
            <person name="Schmutz J."/>
            <person name="Myers R.M."/>
            <person name="Cox D.R."/>
            <person name="Huang X."/>
            <person name="McPherson J.D."/>
            <person name="Mardis E.R."/>
            <person name="Clifton S.W."/>
            <person name="Warren W.C."/>
            <person name="Chinwalla A.T."/>
            <person name="Eddy S.R."/>
            <person name="Marra M.A."/>
            <person name="Ovcharenko I."/>
            <person name="Furey T.S."/>
            <person name="Miller W."/>
            <person name="Eichler E.E."/>
            <person name="Bork P."/>
            <person name="Suyama M."/>
            <person name="Torrents D."/>
            <person name="Waterston R.H."/>
            <person name="Wilson R.K."/>
        </authorList>
    </citation>
    <scope>NUCLEOTIDE SEQUENCE [LARGE SCALE GENOMIC DNA]</scope>
</reference>
<reference key="8">
    <citation type="submission" date="2005-09" db="EMBL/GenBank/DDBJ databases">
        <authorList>
            <person name="Mural R.J."/>
            <person name="Istrail S."/>
            <person name="Sutton G.G."/>
            <person name="Florea L."/>
            <person name="Halpern A.L."/>
            <person name="Mobarry C.M."/>
            <person name="Lippert R."/>
            <person name="Walenz B."/>
            <person name="Shatkay H."/>
            <person name="Dew I."/>
            <person name="Miller J.R."/>
            <person name="Flanigan M.J."/>
            <person name="Edwards N.J."/>
            <person name="Bolanos R."/>
            <person name="Fasulo D."/>
            <person name="Halldorsson B.V."/>
            <person name="Hannenhalli S."/>
            <person name="Turner R."/>
            <person name="Yooseph S."/>
            <person name="Lu F."/>
            <person name="Nusskern D.R."/>
            <person name="Shue B.C."/>
            <person name="Zheng X.H."/>
            <person name="Zhong F."/>
            <person name="Delcher A.L."/>
            <person name="Huson D.H."/>
            <person name="Kravitz S.A."/>
            <person name="Mouchard L."/>
            <person name="Reinert K."/>
            <person name="Remington K.A."/>
            <person name="Clark A.G."/>
            <person name="Waterman M.S."/>
            <person name="Eichler E.E."/>
            <person name="Adams M.D."/>
            <person name="Hunkapiller M.W."/>
            <person name="Myers E.W."/>
            <person name="Venter J.C."/>
        </authorList>
    </citation>
    <scope>NUCLEOTIDE SEQUENCE [LARGE SCALE GENOMIC DNA]</scope>
</reference>
<reference key="9">
    <citation type="journal article" date="2004" name="Genome Res.">
        <title>The status, quality, and expansion of the NIH full-length cDNA project: the Mammalian Gene Collection (MGC).</title>
        <authorList>
            <consortium name="The MGC Project Team"/>
        </authorList>
    </citation>
    <scope>NUCLEOTIDE SEQUENCE [LARGE SCALE MRNA]</scope>
    <scope>VARIANT THR-115</scope>
    <source>
        <tissue>Ovary</tissue>
    </source>
</reference>
<reference key="10">
    <citation type="journal article" date="1989" name="Proc. Natl. Acad. Sci. U.S.A.">
        <title>Sequence investigation of the major gastrointestinal tumor-associated antigen gene family, GA733.</title>
        <authorList>
            <person name="Linnenbach A.J."/>
            <person name="Wojcierowski J."/>
            <person name="Wu S."/>
            <person name="Pyrc J.J."/>
            <person name="Ross A.H."/>
            <person name="Dietzschold B."/>
            <person name="Speicher D."/>
            <person name="Koprowski H."/>
        </authorList>
    </citation>
    <scope>PRELIMINARY PARTIAL NUCLEOTIDE SEQUENCE [GENOMIC DNA] OF 81-126</scope>
    <source>
        <tissue>Placenta</tissue>
    </source>
</reference>
<reference key="11">
    <citation type="journal article" date="1993" name="J. Biol. Chem.">
        <title>Isolation, partial characterization, and molecular cloning of a human colon adenocarcinoma cell-surface glycoprotein recognized by the C215 mouse monoclonal antibody.</title>
        <authorList>
            <person name="Bjoerk P."/>
            <person name="Joensson U."/>
            <person name="Svedberg H."/>
            <person name="Larsson K."/>
            <person name="Lind P."/>
            <person name="Dillner J."/>
            <person name="Hedlund G."/>
            <person name="Dohlsten M."/>
            <person name="Kalland T."/>
        </authorList>
    </citation>
    <scope>PROTEIN SEQUENCE OF 82-100</scope>
    <scope>SUBUNIT</scope>
</reference>
<reference key="12">
    <citation type="journal article" date="2001" name="J. Biol. Chem.">
        <title>Determination of disulfide bond assignments and N-glycosylation sites of the human gastrointestinal carcinoma antigen GA733-2 (CO17-1A, EGP, KS1-4, KSA, and Ep-CAM).</title>
        <authorList>
            <person name="Chong J.M."/>
            <person name="Speicher D.W."/>
        </authorList>
    </citation>
    <scope>DISULFIDE BONDS</scope>
    <scope>GLYCOSYLATION AT ASN-74 AND ASN-111</scope>
</reference>
<reference key="13">
    <citation type="journal article" date="2004" name="Oncogene">
        <title>The carcinoma-associated antigen EpCAM upregulates c-myc and induces cell proliferation.</title>
        <authorList>
            <person name="Muenz M."/>
            <person name="Kieu C."/>
            <person name="Mack B."/>
            <person name="Schmitt B."/>
            <person name="Zeidler R."/>
            <person name="Gires O."/>
        </authorList>
    </citation>
    <scope>FUNCTION</scope>
    <scope>SUBCELLULAR LOCATION</scope>
</reference>
<reference key="14">
    <citation type="journal article" date="2005" name="Cancer Lett.">
        <title>The tumour-associated antigen EpCAM upregulates the fatty acid binding protein E-FABP.</title>
        <authorList>
            <person name="Muenz M."/>
            <person name="Zeidler R."/>
            <person name="Gires O."/>
        </authorList>
    </citation>
    <scope>FUNCTION</scope>
</reference>
<reference key="15">
    <citation type="journal article" date="2005" name="Exp. Cell Res.">
        <title>The cell-cell adhesion molecule EpCAM interacts directly with the tight junction protein claudin-7.</title>
        <authorList>
            <person name="Ladwein M."/>
            <person name="Pape U.F."/>
            <person name="Schmidt D.S."/>
            <person name="Schnoelzer M."/>
            <person name="Fiedler S."/>
            <person name="Langbein L."/>
            <person name="Franke W.W."/>
            <person name="Moldenhauer G."/>
            <person name="Zoeller M."/>
        </authorList>
    </citation>
    <scope>SUBCELLULAR LOCATION</scope>
    <scope>INTERACTION WITH CLDN7</scope>
</reference>
<reference key="16">
    <citation type="journal article" date="2008" name="Front. Biosci.">
        <title>Glycosylation is crucial for stability of tumour and cancer stem cell antigen EpCAM.</title>
        <authorList>
            <person name="Munz M."/>
            <person name="Fellinger K."/>
            <person name="Hofmann T."/>
            <person name="Schmitt B."/>
            <person name="Gires O."/>
        </authorList>
    </citation>
    <scope>GLYCOSYLATION AT ASN-74; ASN-111 AND ASN-198</scope>
    <scope>MUTAGENESIS OF ASN-74; ASN-111 AND ASN-198</scope>
</reference>
<reference key="17">
    <citation type="journal article" date="2009" name="J. Proteome Res.">
        <title>Glycoproteomics analysis of human liver tissue by combination of multiple enzyme digestion and hydrazide chemistry.</title>
        <authorList>
            <person name="Chen R."/>
            <person name="Jiang X."/>
            <person name="Sun D."/>
            <person name="Han G."/>
            <person name="Wang F."/>
            <person name="Ye M."/>
            <person name="Wang L."/>
            <person name="Zou H."/>
        </authorList>
    </citation>
    <scope>GLYCOSYLATION [LARGE SCALE ANALYSIS] AT ASN-198</scope>
    <source>
        <tissue>Liver</tissue>
    </source>
</reference>
<reference key="18">
    <citation type="journal article" date="2009" name="Nat. Genet.">
        <title>Heritable somatic methylation and inactivation of MSH2 in families with Lynch syndrome due to deletion of the 3' exons of TACSTD1.</title>
        <authorList>
            <person name="Ligtenberg M.J."/>
            <person name="Kuiper R.P."/>
            <person name="Chan T.L."/>
            <person name="Goossens M."/>
            <person name="Hebeda K.M."/>
            <person name="Voorendt M."/>
            <person name="Lee T.Y."/>
            <person name="Bodmer D."/>
            <person name="Hoenselaar E."/>
            <person name="Hendriks-Cornelissen S.J."/>
            <person name="Tsui W.Y."/>
            <person name="Kong C.K."/>
            <person name="Brunner H.G."/>
            <person name="van Kessel A.G."/>
            <person name="Yuen S.T."/>
            <person name="van Krieken J.H."/>
            <person name="Leung S.Y."/>
            <person name="Hoogerbrugge N."/>
        </authorList>
    </citation>
    <scope>INVOLVEMENT IN LYNCH8</scope>
</reference>
<reference key="19">
    <citation type="journal article" date="2010" name="J. Biol. Chem.">
        <title>Epithelial cell adhesion molecule regulation is associated with the maintenance of the undifferentiated phenotype of human embryonic stem cells.</title>
        <authorList>
            <person name="Lu T.Y."/>
            <person name="Lu R.M."/>
            <person name="Liao M.Y."/>
            <person name="Yu J."/>
            <person name="Chung C.H."/>
            <person name="Kao C.F."/>
            <person name="Wu H.C."/>
        </authorList>
    </citation>
    <scope>FUNCTION</scope>
    <scope>TISSUE SPECIFICITY</scope>
</reference>
<reference key="20">
    <citation type="journal article" date="2010" name="Stem Cells">
        <title>Characterization of epithelial cell adhesion molecule as a surface marker on undifferentiated human embryonic stem cells.</title>
        <authorList>
            <person name="Ng V.Y."/>
            <person name="Ang S.N."/>
            <person name="Chan J.X."/>
            <person name="Choo A.B."/>
        </authorList>
    </citation>
    <scope>FUNCTION</scope>
    <scope>SUBCELLULAR LOCATION</scope>
</reference>
<reference key="21">
    <citation type="journal article" date="2011" name="BMC Syst. Biol.">
        <title>Initial characterization of the human central proteome.</title>
        <authorList>
            <person name="Burkard T.R."/>
            <person name="Planyavsky M."/>
            <person name="Kaupe I."/>
            <person name="Breitwieser F.P."/>
            <person name="Buerckstuemmer T."/>
            <person name="Bennett K.L."/>
            <person name="Superti-Furga G."/>
            <person name="Colinge J."/>
        </authorList>
    </citation>
    <scope>IDENTIFICATION BY MASS SPECTROMETRY [LARGE SCALE ANALYSIS]</scope>
</reference>
<reference key="22">
    <citation type="journal article" date="2008" name="Gastroenterology">
        <title>Identification of EpCAM as the gene for congenital tufting enteropathy.</title>
        <authorList>
            <person name="Sivagnanam M."/>
            <person name="Mueller J.L."/>
            <person name="Lee H."/>
            <person name="Chen Z."/>
            <person name="Nelson S.F."/>
            <person name="Turner D."/>
            <person name="Zlotkin S.H."/>
            <person name="Pencharz P.B."/>
            <person name="Ngan B.Y."/>
            <person name="Libiger O."/>
            <person name="Schork N.J."/>
            <person name="Lavine J.E."/>
            <person name="Taylor S."/>
            <person name="Newbury R.O."/>
            <person name="Kolodner R.D."/>
            <person name="Hoffman H.M."/>
        </authorList>
    </citation>
    <scope>VARIANT DIAR5 TYR-66</scope>
    <scope>INVOLVEMENT IN DIAR5</scope>
</reference>
<reference key="23">
    <citation type="journal article" date="2014" name="Hum. Genet.">
        <title>Genetic characterization of congenital tufting enteropathy: epcam associated phenotype and involvement of SPINT2 in the syndromic form.</title>
        <authorList>
            <person name="Salomon J."/>
            <person name="Goulet O."/>
            <person name="Canioni D."/>
            <person name="Brousse N."/>
            <person name="Lemale J."/>
            <person name="Tounian P."/>
            <person name="Coulomb A."/>
            <person name="Marinier E."/>
            <person name="Hugot J.P."/>
            <person name="Ruemmele F."/>
            <person name="Dufier J.L."/>
            <person name="Roche O."/>
            <person name="Bodemer C."/>
            <person name="Colomb V."/>
            <person name="Talbotec C."/>
            <person name="Lacaille F."/>
            <person name="Campeotto F."/>
            <person name="Cerf-Bensussan N."/>
            <person name="Janecke A.R."/>
            <person name="Mueller T."/>
            <person name="Koletzko S."/>
            <person name="Bonnefont J.P."/>
            <person name="Lyonnet S."/>
            <person name="Munnich A."/>
            <person name="Poirier F."/>
            <person name="Smahi A."/>
        </authorList>
    </citation>
    <scope>VARIANTS DIAR5 76-SER--ALA-314 DEL; ARG-103; CYS-105; ILE-120 AND 132-GLU--ALA-314 DEL</scope>
    <scope>INVOLVEMENT IN DIAR5</scope>
</reference>
<name>EPCAM_HUMAN</name>
<organism>
    <name type="scientific">Homo sapiens</name>
    <name type="common">Human</name>
    <dbReference type="NCBI Taxonomy" id="9606"/>
    <lineage>
        <taxon>Eukaryota</taxon>
        <taxon>Metazoa</taxon>
        <taxon>Chordata</taxon>
        <taxon>Craniata</taxon>
        <taxon>Vertebrata</taxon>
        <taxon>Euteleostomi</taxon>
        <taxon>Mammalia</taxon>
        <taxon>Eutheria</taxon>
        <taxon>Euarchontoglires</taxon>
        <taxon>Primates</taxon>
        <taxon>Haplorrhini</taxon>
        <taxon>Catarrhini</taxon>
        <taxon>Hominidae</taxon>
        <taxon>Homo</taxon>
    </lineage>
</organism>
<comment type="function">
    <text evidence="4 6 12 13">May act as a physical homophilic interaction molecule between intestinal epithelial cells (IECs) and intraepithelial lymphocytes (IELs) at the mucosal epithelium for providing immunological barrier as a first line of defense against mucosal infection. Plays a role in embryonic stem cells proliferation and differentiation. Up-regulates the expression of FABP5, MYC and cyclins A and E.</text>
</comment>
<comment type="subunit">
    <text evidence="7 18">Monomer. Interacts with phosphorylated CLDN7.</text>
</comment>
<comment type="interaction">
    <interactant intactId="EBI-1171184">
        <id>P16422</id>
    </interactant>
    <interactant intactId="EBI-1049597">
        <id>P27797</id>
        <label>CALR</label>
    </interactant>
    <organismsDiffer>false</organismsDiffer>
    <experiments>3</experiments>
</comment>
<comment type="interaction">
    <interactant intactId="EBI-1171184">
        <id>P16422</id>
    </interactant>
    <interactant intactId="EBI-727477">
        <id>P12830</id>
        <label>CDH1</label>
    </interactant>
    <organismsDiffer>false</organismsDiffer>
    <experiments>3</experiments>
</comment>
<comment type="interaction">
    <interactant intactId="EBI-1171184">
        <id>P16422</id>
    </interactant>
    <interactant intactId="EBI-746189">
        <id>Q15078</id>
        <label>CDK5R1</label>
    </interactant>
    <organismsDiffer>false</organismsDiffer>
    <experiments>3</experiments>
</comment>
<comment type="interaction">
    <interactant intactId="EBI-1171184">
        <id>P16422</id>
    </interactant>
    <interactant intactId="EBI-351007">
        <id>P36957</id>
        <label>DLST</label>
    </interactant>
    <organismsDiffer>false</organismsDiffer>
    <experiments>3</experiments>
</comment>
<comment type="interaction">
    <interactant intactId="EBI-1171184">
        <id>P16422</id>
    </interactant>
    <interactant intactId="EBI-1055945">
        <id>Q8TDX7</id>
        <label>NEK7</label>
    </interactant>
    <organismsDiffer>false</organismsDiffer>
    <experiments>3</experiments>
</comment>
<comment type="subcellular location">
    <subcellularLocation>
        <location evidence="4 7 12">Lateral cell membrane</location>
        <topology evidence="7">Single-pass type I membrane protein</topology>
    </subcellularLocation>
    <subcellularLocation>
        <location evidence="7">Cell junction</location>
        <location evidence="7">Tight junction</location>
    </subcellularLocation>
    <text evidence="7">Colocalizes with CLDN7 at the lateral cell membrane and tight junction.</text>
</comment>
<comment type="tissue specificity">
    <text evidence="13">Highly and selectively expressed by undifferentiated rather than differentiated embryonic stem cells (ESC). Levels rapidly diminish as soon as ESC's differentiate (at protein levels). Expressed in almost all epithelial cell membranes but not on mesodermal or neural cell membranes. Found on the surface of adenocarcinoma.</text>
</comment>
<comment type="PTM">
    <text evidence="3 8 11">Hyperglycosylated in carcinoma tissue as compared with autologous normal epithelia. Glycosylation at Asn-198 is crucial for protein stability.</text>
</comment>
<comment type="disease" evidence="9 15">
    <disease id="DI-02845">
        <name>Diarrhea 5, with tufting enteropathy, congenital</name>
        <acronym>DIAR5</acronym>
        <description>An intractable diarrhea of infancy characterized by villous atrophy and absence of inflammation, with intestinal epithelial cell dysplasia manifesting as focal epithelial tufts in the duodenum and jejunum.</description>
        <dbReference type="MIM" id="613217"/>
    </disease>
    <text>The disease is caused by variants affecting the gene represented in this entry.</text>
</comment>
<comment type="disease" evidence="10">
    <disease id="DI-02724">
        <name>Lynch syndrome 8</name>
        <acronym>LYNCH8</acronym>
        <description>A form of Lynch syndrome, an autosomal dominant disease associated with marked increase in cancer susceptibility. It is characterized by a familial predisposition to early-onset colorectal carcinoma (CRC) and extra-colonic tumors of the gastrointestinal, urological and female reproductive tracts. Lynch syndrome is reported to be the most common form of inherited colorectal cancer in the Western world. Clinically, it is often divided into two subgroups. Type I is characterized by hereditary predisposition to colorectal cancer, a young age of onset, and carcinoma observed in the proximal colon. Type II is characterized by increased risk for cancers in certain tissues such as the uterus, ovary, breast, stomach, small intestine, skin, and larynx in addition to the colon. Diagnosis of classical Lynch syndrome is based on the Amsterdam criteria: 3 or more relatives affected by colorectal cancer, one a first degree relative of the other two; 2 or more generation affected; 1 or more colorectal cancers presenting before 50 years of age; exclusion of hereditary polyposis syndromes. The term 'suspected Lynch syndrome' or 'incomplete Lynch syndrome' can be used to describe families who do not or only partially fulfill the Amsterdam criteria, but in whom a genetic basis for colon cancer is strongly suspected.</description>
        <dbReference type="MIM" id="613244"/>
    </disease>
    <text>The disease is caused by variants affecting the gene represented in this entry. LYNCH8 results from heterozygous deletion of 3-prime exons of EPCAM and intergenic regions directly upstream of MSH2, resulting in transcriptional read-through and epigenetic silencing of MSH2 in tissues expressing EPCAM.</text>
</comment>
<comment type="similarity">
    <text evidence="19">Belongs to the EPCAM family.</text>
</comment>
<comment type="online information" name="Atlas of Genetics and Cytogenetics in Oncology and Haematology">
    <link uri="https://atlasgeneticsoncology.org/gene/42459/TACSTD1"/>
</comment>
<accession>P16422</accession>
<accession>P18180</accession>
<accession>Q6FG26</accession>
<accession>Q6FG49</accession>
<accession>Q96C47</accession>
<accession>Q9UCD0</accession>
<protein>
    <recommendedName>
        <fullName>Epithelial cell adhesion molecule</fullName>
        <shortName>Ep-CAM</shortName>
    </recommendedName>
    <alternativeName>
        <fullName>Adenocarcinoma-associated antigen</fullName>
    </alternativeName>
    <alternativeName>
        <fullName>Cell surface glycoprotein Trop-1</fullName>
    </alternativeName>
    <alternativeName>
        <fullName>Epithelial cell surface antigen</fullName>
    </alternativeName>
    <alternativeName>
        <fullName>Epithelial glycoprotein</fullName>
        <shortName>EGP</shortName>
    </alternativeName>
    <alternativeName>
        <fullName>Epithelial glycoprotein 314</fullName>
        <shortName>EGP314</shortName>
        <shortName>hEGP314</shortName>
    </alternativeName>
    <alternativeName>
        <fullName>KS 1/4 antigen</fullName>
    </alternativeName>
    <alternativeName>
        <fullName>KSA</fullName>
    </alternativeName>
    <alternativeName>
        <fullName>Major gastrointestinal tumor-associated protein GA733-2</fullName>
    </alternativeName>
    <alternativeName>
        <fullName>Tumor-associated calcium signal transducer 1</fullName>
    </alternativeName>
    <cdAntigenName>CD326</cdAntigenName>
</protein>
<gene>
    <name type="primary">EPCAM</name>
    <name type="synonym">GA733-2</name>
    <name type="synonym">M1S2</name>
    <name type="synonym">M4S1</name>
    <name type="synonym">MIC18</name>
    <name type="synonym">TACSTD1</name>
    <name type="synonym">TROP1</name>
</gene>
<sequence length="314" mass="34932">MAPPQVLAFGLLLAAATATFAAAQEECVCENYKLAVNCFVNNNRQCQCTSVGAQNTVICSKLAAKCLVMKAEMNGSKLGRRAKPEGALQNNDGLYDPDCDESGLFKAKQCNGTSMCWCVNTAGVRRTDKDTEITCSERVRTYWIIIELKHKAREKPYDSKSLRTALQKEITTRYQLDPKFITSILYENNVITIDLVQNSSQKTQNDVDIADVAYYFEKDVKGESLFHSKKMDLTVNGEQLDLDPGQTLIYYVDEKAPEFSMQGLKAGVIAVIVVVVIAVVAGIVVLVISRKKRMAKYEKAEIKEMGEMHRELNA</sequence>